<feature type="chain" id="PRO_0000272916" description="Large ribosomal subunit protein uL23cz/uL23cy">
    <location>
        <begin position="1"/>
        <end position="93"/>
    </location>
</feature>
<comment type="function">
    <text evidence="1">Binds to 23S rRNA.</text>
</comment>
<comment type="subunit">
    <text evidence="1">Part of the 50S ribosomal subunit.</text>
</comment>
<comment type="subcellular location">
    <subcellularLocation>
        <location>Plastid</location>
        <location>Chloroplast</location>
    </subcellularLocation>
</comment>
<comment type="similarity">
    <text evidence="2">Belongs to the universal ribosomal protein uL23 family.</text>
</comment>
<evidence type="ECO:0000250" key="1"/>
<evidence type="ECO:0000305" key="2"/>
<accession>Q68RU3</accession>
<organism>
    <name type="scientific">Panax ginseng</name>
    <name type="common">Korean ginseng</name>
    <dbReference type="NCBI Taxonomy" id="4054"/>
    <lineage>
        <taxon>Eukaryota</taxon>
        <taxon>Viridiplantae</taxon>
        <taxon>Streptophyta</taxon>
        <taxon>Embryophyta</taxon>
        <taxon>Tracheophyta</taxon>
        <taxon>Spermatophyta</taxon>
        <taxon>Magnoliopsida</taxon>
        <taxon>eudicotyledons</taxon>
        <taxon>Gunneridae</taxon>
        <taxon>Pentapetalae</taxon>
        <taxon>asterids</taxon>
        <taxon>campanulids</taxon>
        <taxon>Apiales</taxon>
        <taxon>Araliaceae</taxon>
        <taxon>Panax</taxon>
    </lineage>
</organism>
<proteinExistence type="inferred from homology"/>
<name>RK23_PANGI</name>
<protein>
    <recommendedName>
        <fullName evidence="2">Large ribosomal subunit protein uL23cz/uL23cy</fullName>
    </recommendedName>
    <alternativeName>
        <fullName>50S ribosomal protein L23, chloroplastic</fullName>
    </alternativeName>
</protein>
<sequence>MDGIKYAVFTDKSIRLLGKNQYTSNVESGSTRTEIKHWVELFFGVKVIAMNSHRLPGRGRRMGPIMGQTMHYRRMIITLQPGYSIPPLRKKRT</sequence>
<keyword id="KW-0150">Chloroplast</keyword>
<keyword id="KW-0934">Plastid</keyword>
<keyword id="KW-0687">Ribonucleoprotein</keyword>
<keyword id="KW-0689">Ribosomal protein</keyword>
<keyword id="KW-0694">RNA-binding</keyword>
<keyword id="KW-0699">rRNA-binding</keyword>
<reference key="1">
    <citation type="journal article" date="2004" name="DNA Res.">
        <title>Complete chloroplast genome sequence from Korea ginseng (Panax schinseng Nees) and comparative analysis of sequence evolution among 17 vascular plants.</title>
        <authorList>
            <person name="Kim K.-J."/>
            <person name="Lee H.-L."/>
        </authorList>
    </citation>
    <scope>NUCLEOTIDE SEQUENCE [LARGE SCALE GENOMIC DNA]</scope>
</reference>
<geneLocation type="chloroplast"/>
<dbReference type="EMBL" id="AY582139">
    <property type="protein sequence ID" value="AAT98551.1"/>
    <property type="molecule type" value="Genomic_DNA"/>
</dbReference>
<dbReference type="EMBL" id="AY582139">
    <property type="protein sequence ID" value="AAT98574.1"/>
    <property type="molecule type" value="Genomic_DNA"/>
</dbReference>
<dbReference type="SMR" id="Q68RU3"/>
<dbReference type="GO" id="GO:0009507">
    <property type="term" value="C:chloroplast"/>
    <property type="evidence" value="ECO:0007669"/>
    <property type="project" value="UniProtKB-SubCell"/>
</dbReference>
<dbReference type="GO" id="GO:1990904">
    <property type="term" value="C:ribonucleoprotein complex"/>
    <property type="evidence" value="ECO:0007669"/>
    <property type="project" value="UniProtKB-KW"/>
</dbReference>
<dbReference type="GO" id="GO:0005840">
    <property type="term" value="C:ribosome"/>
    <property type="evidence" value="ECO:0007669"/>
    <property type="project" value="UniProtKB-KW"/>
</dbReference>
<dbReference type="GO" id="GO:0003729">
    <property type="term" value="F:mRNA binding"/>
    <property type="evidence" value="ECO:0007669"/>
    <property type="project" value="UniProtKB-ARBA"/>
</dbReference>
<dbReference type="GO" id="GO:0019843">
    <property type="term" value="F:rRNA binding"/>
    <property type="evidence" value="ECO:0007669"/>
    <property type="project" value="UniProtKB-UniRule"/>
</dbReference>
<dbReference type="GO" id="GO:0003735">
    <property type="term" value="F:structural constituent of ribosome"/>
    <property type="evidence" value="ECO:0007669"/>
    <property type="project" value="InterPro"/>
</dbReference>
<dbReference type="GO" id="GO:0006412">
    <property type="term" value="P:translation"/>
    <property type="evidence" value="ECO:0007669"/>
    <property type="project" value="UniProtKB-UniRule"/>
</dbReference>
<dbReference type="FunFam" id="3.30.70.330:FF:000002">
    <property type="entry name" value="50S ribosomal protein L23, chloroplastic"/>
    <property type="match status" value="1"/>
</dbReference>
<dbReference type="Gene3D" id="3.30.70.330">
    <property type="match status" value="1"/>
</dbReference>
<dbReference type="HAMAP" id="MF_01369_B">
    <property type="entry name" value="Ribosomal_uL23_B"/>
    <property type="match status" value="1"/>
</dbReference>
<dbReference type="InterPro" id="IPR012677">
    <property type="entry name" value="Nucleotide-bd_a/b_plait_sf"/>
</dbReference>
<dbReference type="InterPro" id="IPR013025">
    <property type="entry name" value="Ribosomal_uL23-like"/>
</dbReference>
<dbReference type="InterPro" id="IPR012678">
    <property type="entry name" value="Ribosomal_uL23/eL15/eS24_sf"/>
</dbReference>
<dbReference type="InterPro" id="IPR001014">
    <property type="entry name" value="Ribosomal_uL23_CS"/>
</dbReference>
<dbReference type="PANTHER" id="PTHR11620">
    <property type="entry name" value="60S RIBOSOMAL PROTEIN L23A"/>
    <property type="match status" value="1"/>
</dbReference>
<dbReference type="Pfam" id="PF00276">
    <property type="entry name" value="Ribosomal_L23"/>
    <property type="match status" value="1"/>
</dbReference>
<dbReference type="SUPFAM" id="SSF54189">
    <property type="entry name" value="Ribosomal proteins S24e, L23 and L15e"/>
    <property type="match status" value="1"/>
</dbReference>
<dbReference type="PROSITE" id="PS00050">
    <property type="entry name" value="RIBOSOMAL_L23"/>
    <property type="match status" value="1"/>
</dbReference>
<gene>
    <name type="primary">rpl23-A</name>
    <name type="ORF">PSC0877</name>
</gene>
<gene>
    <name type="primary">rpl23-B</name>
    <name type="ORF">PSC1544</name>
</gene>